<gene>
    <name evidence="5" type="primary">hybG</name>
    <name type="ordered locus">b2990</name>
    <name type="ordered locus">JW2958</name>
</gene>
<feature type="chain" id="PRO_0000201403" description="Hydrogenase maturation factor HybG">
    <location>
        <begin position="1"/>
        <end position="82"/>
    </location>
</feature>
<feature type="site" description="Important for interaction with HypD and the precursor form of hydrogenase" evidence="1">
    <location>
        <position position="2"/>
    </location>
</feature>
<organism>
    <name type="scientific">Escherichia coli (strain K12)</name>
    <dbReference type="NCBI Taxonomy" id="83333"/>
    <lineage>
        <taxon>Bacteria</taxon>
        <taxon>Pseudomonadati</taxon>
        <taxon>Pseudomonadota</taxon>
        <taxon>Gammaproteobacteria</taxon>
        <taxon>Enterobacterales</taxon>
        <taxon>Enterobacteriaceae</taxon>
        <taxon>Escherichia</taxon>
    </lineage>
</organism>
<comment type="function">
    <text evidence="1 2 4 7">Involved in the maturation of [NiFe] hydrogenases. Involved in the biosynthesis of the Fe(CN)(2)CO cofactor (PubMed:16412426). HybG delivers iron-bound CO(2) to HypD where reduction to CO probably occurs (PubMed:23851071). In complex with HypD, accepts the cyanide ligand generated by HypF and HypE, and also coordinates the carbon monoxide ligand (By similarity). Involved in the maturation of the hydrogenase 2. Also participates in the maturation of hydrogenase 1 (PubMed:11292801).</text>
</comment>
<comment type="pathway">
    <text evidence="6">Protein modification; [NiFe] hydrogenase maturation.</text>
</comment>
<comment type="subunit">
    <text evidence="2 3">Forms a complex with HypD and HypE (PubMed:16412426). Interacts with the precursor form of HybC (pre-HybC), the large subunit of hydrogenase 2, and with HyaB, the large subunit of hydrogenase 1 (PubMed:11292801, PubMed:16412426).</text>
</comment>
<comment type="interaction">
    <interactant intactId="EBI-562426">
        <id>P0AAM7</id>
    </interactant>
    <interactant intactId="EBI-549849">
        <id>P0ACE0</id>
        <label>hybC</label>
    </interactant>
    <organismsDiffer>false</organismsDiffer>
    <experiments>2</experiments>
</comment>
<comment type="interaction">
    <interactant intactId="EBI-562426">
        <id>P0AAM7</id>
    </interactant>
    <interactant intactId="EBI-552711">
        <id>P24192</id>
        <label>hypD</label>
    </interactant>
    <organismsDiffer>false</organismsDiffer>
    <experiments>7</experiments>
</comment>
<comment type="interaction">
    <interactant intactId="EBI-562426">
        <id>P0AAM7</id>
    </interactant>
    <interactant intactId="EBI-9128400">
        <id>P43674</id>
        <label>ycaL</label>
    </interactant>
    <organismsDiffer>false</organismsDiffer>
    <experiments>2</experiments>
</comment>
<comment type="disruption phenotype">
    <text evidence="2">Deletion of the gene abolishes the generation of active hydrogenase 2, but only reduces hydrogenase 1 activity. It does not affect the maturation of hydrogenase 3. Deletion of both hybG and hypC completely abolishes hydrogenase activity.</text>
</comment>
<comment type="similarity">
    <text evidence="6">Belongs to the HupF/HypC family.</text>
</comment>
<reference key="1">
    <citation type="journal article" date="1994" name="J. Bacteriol.">
        <title>Cloning, sequencing, and mutational analysis of the hyb operon encoding Escherichia coli hydrogenase 2.</title>
        <authorList>
            <person name="Menon N.K."/>
            <person name="Chatelus C.Y."/>
            <person name="Dervartanian M."/>
            <person name="Wendt J.C."/>
            <person name="Shanmugam K.T."/>
            <person name="Peck H.D. Jr."/>
            <person name="Przybyla A.E."/>
        </authorList>
    </citation>
    <scope>NUCLEOTIDE SEQUENCE [GENOMIC DNA]</scope>
    <source>
        <strain>K12 / TG1</strain>
    </source>
</reference>
<reference key="2">
    <citation type="journal article" date="1997" name="Science">
        <title>The complete genome sequence of Escherichia coli K-12.</title>
        <authorList>
            <person name="Blattner F.R."/>
            <person name="Plunkett G. III"/>
            <person name="Bloch C.A."/>
            <person name="Perna N.T."/>
            <person name="Burland V."/>
            <person name="Riley M."/>
            <person name="Collado-Vides J."/>
            <person name="Glasner J.D."/>
            <person name="Rode C.K."/>
            <person name="Mayhew G.F."/>
            <person name="Gregor J."/>
            <person name="Davis N.W."/>
            <person name="Kirkpatrick H.A."/>
            <person name="Goeden M.A."/>
            <person name="Rose D.J."/>
            <person name="Mau B."/>
            <person name="Shao Y."/>
        </authorList>
    </citation>
    <scope>NUCLEOTIDE SEQUENCE [LARGE SCALE GENOMIC DNA]</scope>
    <source>
        <strain>K12 / MG1655 / ATCC 47076</strain>
    </source>
</reference>
<reference key="3">
    <citation type="journal article" date="2006" name="Mol. Syst. Biol.">
        <title>Highly accurate genome sequences of Escherichia coli K-12 strains MG1655 and W3110.</title>
        <authorList>
            <person name="Hayashi K."/>
            <person name="Morooka N."/>
            <person name="Yamamoto Y."/>
            <person name="Fujita K."/>
            <person name="Isono K."/>
            <person name="Choi S."/>
            <person name="Ohtsubo E."/>
            <person name="Baba T."/>
            <person name="Wanner B.L."/>
            <person name="Mori H."/>
            <person name="Horiuchi T."/>
        </authorList>
    </citation>
    <scope>NUCLEOTIDE SEQUENCE [LARGE SCALE GENOMIC DNA]</scope>
    <source>
        <strain>K12 / W3110 / ATCC 27325 / DSM 5911</strain>
    </source>
</reference>
<reference key="4">
    <citation type="journal article" date="2001" name="J. Bacteriol.">
        <title>Interplay between the specific chaperone-like proteins HybG and HypC in maturation of hydrogenases 1, 2, and 3 from Escherichia coli.</title>
        <authorList>
            <person name="Blokesch M."/>
            <person name="Magalon A."/>
            <person name="Boeck A."/>
        </authorList>
    </citation>
    <scope>FUNCTION</scope>
    <scope>INTERACTION WITH HYBC</scope>
    <scope>DISRUPTION PHENOTYPE</scope>
</reference>
<reference key="5">
    <citation type="journal article" date="2006" name="FEBS Lett.">
        <title>Interactions of the Escherichia coli hydrogenase biosynthetic proteins: HybG complex formation.</title>
        <authorList>
            <person name="Butland G."/>
            <person name="Zhang J.W."/>
            <person name="Yang W."/>
            <person name="Sheung A."/>
            <person name="Wong P."/>
            <person name="Greenblatt J.F."/>
            <person name="Emili A."/>
            <person name="Zamble D.B."/>
        </authorList>
    </citation>
    <scope>PROBABLE FUNCTION</scope>
    <scope>INTERACTION WITH HYPD; HYPE; HYBC AND HYAB</scope>
</reference>
<reference key="6">
    <citation type="journal article" date="2013" name="FEBS Lett.">
        <title>The [NiFe]-hydrogenase accessory chaperones HypC and HybG of Escherichia coli are iron- and carbon dioxide-binding proteins.</title>
        <authorList>
            <person name="Soboh B."/>
            <person name="Stripp S.T."/>
            <person name="Bielak C."/>
            <person name="Lindenstrauss U."/>
            <person name="Braussemann M."/>
            <person name="Javaid M."/>
            <person name="Hallensleben M."/>
            <person name="Granich C."/>
            <person name="Herzberg M."/>
            <person name="Heberle J."/>
            <person name="Sawers R.G."/>
        </authorList>
    </citation>
    <scope>FUNCTION</scope>
</reference>
<dbReference type="EMBL" id="U09177">
    <property type="protein sequence ID" value="AAA21595.1"/>
    <property type="molecule type" value="Genomic_DNA"/>
</dbReference>
<dbReference type="EMBL" id="U28377">
    <property type="protein sequence ID" value="AAA69157.1"/>
    <property type="molecule type" value="Genomic_DNA"/>
</dbReference>
<dbReference type="EMBL" id="U00096">
    <property type="protein sequence ID" value="AAC76026.1"/>
    <property type="molecule type" value="Genomic_DNA"/>
</dbReference>
<dbReference type="EMBL" id="AP009048">
    <property type="protein sequence ID" value="BAE77051.1"/>
    <property type="molecule type" value="Genomic_DNA"/>
</dbReference>
<dbReference type="PIR" id="G55516">
    <property type="entry name" value="G55516"/>
</dbReference>
<dbReference type="RefSeq" id="NP_417464.1">
    <property type="nucleotide sequence ID" value="NC_000913.3"/>
</dbReference>
<dbReference type="RefSeq" id="WP_000334896.1">
    <property type="nucleotide sequence ID" value="NZ_STEB01000001.1"/>
</dbReference>
<dbReference type="SMR" id="P0AAM7"/>
<dbReference type="BioGRID" id="4262372">
    <property type="interactions" value="7"/>
</dbReference>
<dbReference type="BioGRID" id="852328">
    <property type="interactions" value="4"/>
</dbReference>
<dbReference type="ComplexPortal" id="CPX-5283">
    <property type="entry name" value="Hybg-HypDE Ni-hydrogenase maturation complex"/>
</dbReference>
<dbReference type="DIP" id="DIP-36429N"/>
<dbReference type="FunCoup" id="P0AAM7">
    <property type="interactions" value="30"/>
</dbReference>
<dbReference type="IntAct" id="P0AAM7">
    <property type="interactions" value="11"/>
</dbReference>
<dbReference type="STRING" id="511145.b2990"/>
<dbReference type="TCDB" id="3.D.7.2.5">
    <property type="family name" value="the h2:heterodisulfide oxidoreductase (hho) family"/>
</dbReference>
<dbReference type="PaxDb" id="511145-b2990"/>
<dbReference type="EnsemblBacteria" id="AAC76026">
    <property type="protein sequence ID" value="AAC76026"/>
    <property type="gene ID" value="b2990"/>
</dbReference>
<dbReference type="GeneID" id="93778995"/>
<dbReference type="GeneID" id="948020"/>
<dbReference type="KEGG" id="ecj:JW2958"/>
<dbReference type="KEGG" id="eco:b2990"/>
<dbReference type="KEGG" id="ecoc:C3026_16355"/>
<dbReference type="PATRIC" id="fig|1411691.4.peg.3739"/>
<dbReference type="EchoBASE" id="EB1753"/>
<dbReference type="eggNOG" id="COG0298">
    <property type="taxonomic scope" value="Bacteria"/>
</dbReference>
<dbReference type="HOGENOM" id="CLU_159381_1_1_6"/>
<dbReference type="InParanoid" id="P0AAM7"/>
<dbReference type="OMA" id="EEFGDPW"/>
<dbReference type="OrthoDB" id="9806017at2"/>
<dbReference type="PhylomeDB" id="P0AAM7"/>
<dbReference type="BioCyc" id="EcoCyc:EG11805-MONOMER"/>
<dbReference type="UniPathway" id="UPA00335"/>
<dbReference type="PRO" id="PR:P0AAM7"/>
<dbReference type="Proteomes" id="UP000000625">
    <property type="component" value="Chromosome"/>
</dbReference>
<dbReference type="GO" id="GO:1902670">
    <property type="term" value="F:carbon dioxide binding"/>
    <property type="evidence" value="ECO:0000314"/>
    <property type="project" value="EcoCyc"/>
</dbReference>
<dbReference type="GO" id="GO:0042802">
    <property type="term" value="F:identical protein binding"/>
    <property type="evidence" value="ECO:0000314"/>
    <property type="project" value="EcoCyc"/>
</dbReference>
<dbReference type="GO" id="GO:0005506">
    <property type="term" value="F:iron ion binding"/>
    <property type="evidence" value="ECO:0000314"/>
    <property type="project" value="EcoCyc"/>
</dbReference>
<dbReference type="GO" id="GO:0051604">
    <property type="term" value="P:protein maturation"/>
    <property type="evidence" value="ECO:0000314"/>
    <property type="project" value="EcoCyc"/>
</dbReference>
<dbReference type="GO" id="GO:0065003">
    <property type="term" value="P:protein-containing complex assembly"/>
    <property type="evidence" value="ECO:0000314"/>
    <property type="project" value="ComplexPortal"/>
</dbReference>
<dbReference type="FunFam" id="2.30.30.140:FF:000022">
    <property type="entry name" value="Hydrogenase assembly chaperone HybG"/>
    <property type="match status" value="1"/>
</dbReference>
<dbReference type="Gene3D" id="2.30.30.140">
    <property type="match status" value="1"/>
</dbReference>
<dbReference type="InterPro" id="IPR019812">
    <property type="entry name" value="Hydgase_assmbl_chp_CS"/>
</dbReference>
<dbReference type="InterPro" id="IPR001109">
    <property type="entry name" value="Hydrogenase_HupF/HypC"/>
</dbReference>
<dbReference type="NCBIfam" id="TIGR00074">
    <property type="entry name" value="hypC_hupF"/>
    <property type="match status" value="1"/>
</dbReference>
<dbReference type="NCBIfam" id="NF007721">
    <property type="entry name" value="PRK10413.1"/>
    <property type="match status" value="1"/>
</dbReference>
<dbReference type="PANTHER" id="PTHR35177">
    <property type="entry name" value="HYDROGENASE MATURATION FACTOR HYBG"/>
    <property type="match status" value="1"/>
</dbReference>
<dbReference type="PANTHER" id="PTHR35177:SF2">
    <property type="entry name" value="HYDROGENASE MATURATION FACTOR HYBG"/>
    <property type="match status" value="1"/>
</dbReference>
<dbReference type="Pfam" id="PF01455">
    <property type="entry name" value="HupF_HypC"/>
    <property type="match status" value="1"/>
</dbReference>
<dbReference type="PRINTS" id="PR00445">
    <property type="entry name" value="HUPFHYPC"/>
</dbReference>
<dbReference type="SUPFAM" id="SSF159127">
    <property type="entry name" value="HupF/HypC-like"/>
    <property type="match status" value="1"/>
</dbReference>
<dbReference type="PROSITE" id="PS01097">
    <property type="entry name" value="HUPF_HYPC"/>
    <property type="match status" value="1"/>
</dbReference>
<evidence type="ECO:0000250" key="1">
    <source>
        <dbReference type="UniProtKB" id="P0AAM3"/>
    </source>
</evidence>
<evidence type="ECO:0000269" key="2">
    <source>
    </source>
</evidence>
<evidence type="ECO:0000269" key="3">
    <source>
    </source>
</evidence>
<evidence type="ECO:0000269" key="4">
    <source>
    </source>
</evidence>
<evidence type="ECO:0000303" key="5">
    <source>
    </source>
</evidence>
<evidence type="ECO:0000305" key="6"/>
<evidence type="ECO:0000305" key="7">
    <source>
    </source>
</evidence>
<protein>
    <recommendedName>
        <fullName evidence="6">Hydrogenase maturation factor HybG</fullName>
    </recommendedName>
    <alternativeName>
        <fullName evidence="6">Hydrogenase-2 operon protein HybG</fullName>
    </alternativeName>
</protein>
<proteinExistence type="evidence at protein level"/>
<accession>P0AAM7</accession>
<accession>P37185</accession>
<accession>Q2M9K5</accession>
<sequence>MCIGVPGQVLAVGEDIHQLAQVEVCGIKRDVNIALICEGNPADLLGQWVLVHVGFAMSIIDEDEAKATLDALRQMDYDITSA</sequence>
<keyword id="KW-1185">Reference proteome</keyword>
<name>HYBG_ECOLI</name>